<comment type="function">
    <text evidence="1">Binds 23S rRNA and is also seen to make contacts with the A and possibly P site tRNAs.</text>
</comment>
<comment type="subunit">
    <text evidence="1">Part of the 50S ribosomal subunit.</text>
</comment>
<comment type="similarity">
    <text evidence="1">Belongs to the universal ribosomal protein uL16 family.</text>
</comment>
<feature type="chain" id="PRO_0000062150" description="Large ribosomal subunit protein uL16">
    <location>
        <begin position="1"/>
        <end position="139"/>
    </location>
</feature>
<feature type="region of interest" description="Disordered" evidence="2">
    <location>
        <begin position="1"/>
        <end position="30"/>
    </location>
</feature>
<feature type="compositionally biased region" description="Basic residues" evidence="2">
    <location>
        <begin position="1"/>
        <end position="11"/>
    </location>
</feature>
<protein>
    <recommendedName>
        <fullName evidence="1">Large ribosomal subunit protein uL16</fullName>
    </recommendedName>
    <alternativeName>
        <fullName evidence="3">50S ribosomal protein L16</fullName>
    </alternativeName>
</protein>
<proteinExistence type="inferred from homology"/>
<reference key="1">
    <citation type="journal article" date="2005" name="J. Bacteriol.">
        <title>Swine and poultry pathogens: the complete genome sequences of two strains of Mycoplasma hyopneumoniae and a strain of Mycoplasma synoviae.</title>
        <authorList>
            <person name="Vasconcelos A.T.R."/>
            <person name="Ferreira H.B."/>
            <person name="Bizarro C.V."/>
            <person name="Bonatto S.L."/>
            <person name="Carvalho M.O."/>
            <person name="Pinto P.M."/>
            <person name="Almeida D.F."/>
            <person name="Almeida L.G.P."/>
            <person name="Almeida R."/>
            <person name="Alves-Junior L."/>
            <person name="Assuncao E.N."/>
            <person name="Azevedo V.A.C."/>
            <person name="Bogo M.R."/>
            <person name="Brigido M.M."/>
            <person name="Brocchi M."/>
            <person name="Burity H.A."/>
            <person name="Camargo A.A."/>
            <person name="Camargo S.S."/>
            <person name="Carepo M.S."/>
            <person name="Carraro D.M."/>
            <person name="de Mattos Cascardo J.C."/>
            <person name="Castro L.A."/>
            <person name="Cavalcanti G."/>
            <person name="Chemale G."/>
            <person name="Collevatti R.G."/>
            <person name="Cunha C.W."/>
            <person name="Dallagiovanna B."/>
            <person name="Dambros B.P."/>
            <person name="Dellagostin O.A."/>
            <person name="Falcao C."/>
            <person name="Fantinatti-Garboggini F."/>
            <person name="Felipe M.S.S."/>
            <person name="Fiorentin L."/>
            <person name="Franco G.R."/>
            <person name="Freitas N.S.A."/>
            <person name="Frias D."/>
            <person name="Grangeiro T.B."/>
            <person name="Grisard E.C."/>
            <person name="Guimaraes C.T."/>
            <person name="Hungria M."/>
            <person name="Jardim S.N."/>
            <person name="Krieger M.A."/>
            <person name="Laurino J.P."/>
            <person name="Lima L.F.A."/>
            <person name="Lopes M.I."/>
            <person name="Loreto E.L.S."/>
            <person name="Madeira H.M.F."/>
            <person name="Manfio G.P."/>
            <person name="Maranhao A.Q."/>
            <person name="Martinkovics C.T."/>
            <person name="Medeiros S.R.B."/>
            <person name="Moreira M.A.M."/>
            <person name="Neiva M."/>
            <person name="Ramalho-Neto C.E."/>
            <person name="Nicolas M.F."/>
            <person name="Oliveira S.C."/>
            <person name="Paixao R.F.C."/>
            <person name="Pedrosa F.O."/>
            <person name="Pena S.D.J."/>
            <person name="Pereira M."/>
            <person name="Pereira-Ferrari L."/>
            <person name="Piffer I."/>
            <person name="Pinto L.S."/>
            <person name="Potrich D.P."/>
            <person name="Salim A.C.M."/>
            <person name="Santos F.R."/>
            <person name="Schmitt R."/>
            <person name="Schneider M.P.C."/>
            <person name="Schrank A."/>
            <person name="Schrank I.S."/>
            <person name="Schuck A.F."/>
            <person name="Seuanez H.N."/>
            <person name="Silva D.W."/>
            <person name="Silva R."/>
            <person name="Silva S.C."/>
            <person name="Soares C.M.A."/>
            <person name="Souza K.R.L."/>
            <person name="Souza R.C."/>
            <person name="Staats C.C."/>
            <person name="Steffens M.B.R."/>
            <person name="Teixeira S.M.R."/>
            <person name="Urmenyi T.P."/>
            <person name="Vainstein M.H."/>
            <person name="Zuccherato L.W."/>
            <person name="Simpson A.J.G."/>
            <person name="Zaha A."/>
        </authorList>
    </citation>
    <scope>NUCLEOTIDE SEQUENCE [LARGE SCALE GENOMIC DNA]</scope>
    <source>
        <strain>53</strain>
    </source>
</reference>
<sequence>MLQPKRTKYRKPFLQSHDKRKAHKGNKVSFGSHGLQAVTSAWVDSRQIESARIAATRSLGREGNVIIRIFPHFSKTSKPIGVRMGSGKGSPEKWYTPVKVNTVVFEIQGVSAERAKEALRLAGHKLPVKWKIIEKEGVN</sequence>
<evidence type="ECO:0000255" key="1">
    <source>
        <dbReference type="HAMAP-Rule" id="MF_01342"/>
    </source>
</evidence>
<evidence type="ECO:0000256" key="2">
    <source>
        <dbReference type="SAM" id="MobiDB-lite"/>
    </source>
</evidence>
<evidence type="ECO:0000305" key="3"/>
<gene>
    <name evidence="1" type="primary">rplP</name>
    <name type="ordered locus">MS53_0636</name>
</gene>
<name>RL16_MYCS5</name>
<organism>
    <name type="scientific">Mycoplasmopsis synoviae (strain 53)</name>
    <name type="common">Mycoplasma synoviae</name>
    <dbReference type="NCBI Taxonomy" id="262723"/>
    <lineage>
        <taxon>Bacteria</taxon>
        <taxon>Bacillati</taxon>
        <taxon>Mycoplasmatota</taxon>
        <taxon>Mycoplasmoidales</taxon>
        <taxon>Metamycoplasmataceae</taxon>
        <taxon>Mycoplasmopsis</taxon>
    </lineage>
</organism>
<keyword id="KW-1185">Reference proteome</keyword>
<keyword id="KW-0687">Ribonucleoprotein</keyword>
<keyword id="KW-0689">Ribosomal protein</keyword>
<keyword id="KW-0694">RNA-binding</keyword>
<keyword id="KW-0699">rRNA-binding</keyword>
<keyword id="KW-0820">tRNA-binding</keyword>
<dbReference type="EMBL" id="AE017245">
    <property type="protein sequence ID" value="AAZ44043.1"/>
    <property type="molecule type" value="Genomic_DNA"/>
</dbReference>
<dbReference type="RefSeq" id="WP_011283772.1">
    <property type="nucleotide sequence ID" value="NC_007294.1"/>
</dbReference>
<dbReference type="SMR" id="Q4A5C8"/>
<dbReference type="STRING" id="262723.MS53_0636"/>
<dbReference type="KEGG" id="msy:MS53_0636"/>
<dbReference type="eggNOG" id="COG0197">
    <property type="taxonomic scope" value="Bacteria"/>
</dbReference>
<dbReference type="HOGENOM" id="CLU_078858_2_1_14"/>
<dbReference type="OrthoDB" id="9802589at2"/>
<dbReference type="Proteomes" id="UP000000549">
    <property type="component" value="Chromosome"/>
</dbReference>
<dbReference type="GO" id="GO:0022625">
    <property type="term" value="C:cytosolic large ribosomal subunit"/>
    <property type="evidence" value="ECO:0007669"/>
    <property type="project" value="TreeGrafter"/>
</dbReference>
<dbReference type="GO" id="GO:0019843">
    <property type="term" value="F:rRNA binding"/>
    <property type="evidence" value="ECO:0007669"/>
    <property type="project" value="UniProtKB-UniRule"/>
</dbReference>
<dbReference type="GO" id="GO:0003735">
    <property type="term" value="F:structural constituent of ribosome"/>
    <property type="evidence" value="ECO:0007669"/>
    <property type="project" value="InterPro"/>
</dbReference>
<dbReference type="GO" id="GO:0000049">
    <property type="term" value="F:tRNA binding"/>
    <property type="evidence" value="ECO:0007669"/>
    <property type="project" value="UniProtKB-KW"/>
</dbReference>
<dbReference type="GO" id="GO:0006412">
    <property type="term" value="P:translation"/>
    <property type="evidence" value="ECO:0007669"/>
    <property type="project" value="UniProtKB-UniRule"/>
</dbReference>
<dbReference type="CDD" id="cd01433">
    <property type="entry name" value="Ribosomal_L16_L10e"/>
    <property type="match status" value="1"/>
</dbReference>
<dbReference type="FunFam" id="3.90.1170.10:FF:000001">
    <property type="entry name" value="50S ribosomal protein L16"/>
    <property type="match status" value="1"/>
</dbReference>
<dbReference type="Gene3D" id="3.90.1170.10">
    <property type="entry name" value="Ribosomal protein L10e/L16"/>
    <property type="match status" value="1"/>
</dbReference>
<dbReference type="HAMAP" id="MF_01342">
    <property type="entry name" value="Ribosomal_uL16"/>
    <property type="match status" value="1"/>
</dbReference>
<dbReference type="InterPro" id="IPR047873">
    <property type="entry name" value="Ribosomal_uL16"/>
</dbReference>
<dbReference type="InterPro" id="IPR000114">
    <property type="entry name" value="Ribosomal_uL16_bact-type"/>
</dbReference>
<dbReference type="InterPro" id="IPR020798">
    <property type="entry name" value="Ribosomal_uL16_CS"/>
</dbReference>
<dbReference type="InterPro" id="IPR016180">
    <property type="entry name" value="Ribosomal_uL16_dom"/>
</dbReference>
<dbReference type="InterPro" id="IPR036920">
    <property type="entry name" value="Ribosomal_uL16_sf"/>
</dbReference>
<dbReference type="NCBIfam" id="TIGR01164">
    <property type="entry name" value="rplP_bact"/>
    <property type="match status" value="1"/>
</dbReference>
<dbReference type="PANTHER" id="PTHR12220">
    <property type="entry name" value="50S/60S RIBOSOMAL PROTEIN L16"/>
    <property type="match status" value="1"/>
</dbReference>
<dbReference type="PANTHER" id="PTHR12220:SF13">
    <property type="entry name" value="LARGE RIBOSOMAL SUBUNIT PROTEIN UL16M"/>
    <property type="match status" value="1"/>
</dbReference>
<dbReference type="Pfam" id="PF00252">
    <property type="entry name" value="Ribosomal_L16"/>
    <property type="match status" value="1"/>
</dbReference>
<dbReference type="PRINTS" id="PR00060">
    <property type="entry name" value="RIBOSOMALL16"/>
</dbReference>
<dbReference type="SUPFAM" id="SSF54686">
    <property type="entry name" value="Ribosomal protein L16p/L10e"/>
    <property type="match status" value="1"/>
</dbReference>
<dbReference type="PROSITE" id="PS00701">
    <property type="entry name" value="RIBOSOMAL_L16_2"/>
    <property type="match status" value="1"/>
</dbReference>
<accession>Q4A5C8</accession>